<gene>
    <name type="ordered locus">RPE_1881</name>
</gene>
<organism>
    <name type="scientific">Rhodopseudomonas palustris (strain BisA53)</name>
    <dbReference type="NCBI Taxonomy" id="316055"/>
    <lineage>
        <taxon>Bacteria</taxon>
        <taxon>Pseudomonadati</taxon>
        <taxon>Pseudomonadota</taxon>
        <taxon>Alphaproteobacteria</taxon>
        <taxon>Hyphomicrobiales</taxon>
        <taxon>Nitrobacteraceae</taxon>
        <taxon>Rhodopseudomonas</taxon>
    </lineage>
</organism>
<feature type="chain" id="PRO_1000044807" description="UPF0260 protein RPE_1881">
    <location>
        <begin position="1"/>
        <end position="170"/>
    </location>
</feature>
<dbReference type="EMBL" id="CP000463">
    <property type="protein sequence ID" value="ABJ05829.1"/>
    <property type="molecule type" value="Genomic_DNA"/>
</dbReference>
<dbReference type="STRING" id="316055.RPE_1881"/>
<dbReference type="KEGG" id="rpe:RPE_1881"/>
<dbReference type="eggNOG" id="COG2983">
    <property type="taxonomic scope" value="Bacteria"/>
</dbReference>
<dbReference type="HOGENOM" id="CLU_109769_0_0_5"/>
<dbReference type="OrthoDB" id="9786855at2"/>
<dbReference type="HAMAP" id="MF_00676">
    <property type="entry name" value="UPF0260"/>
    <property type="match status" value="1"/>
</dbReference>
<dbReference type="InterPro" id="IPR005358">
    <property type="entry name" value="Puta_zinc/iron-chelating_dom"/>
</dbReference>
<dbReference type="InterPro" id="IPR008228">
    <property type="entry name" value="UCP006173"/>
</dbReference>
<dbReference type="NCBIfam" id="NF003501">
    <property type="entry name" value="PRK05170.1-5"/>
    <property type="match status" value="1"/>
</dbReference>
<dbReference type="NCBIfam" id="NF003507">
    <property type="entry name" value="PRK05170.2-5"/>
    <property type="match status" value="1"/>
</dbReference>
<dbReference type="PANTHER" id="PTHR37421">
    <property type="entry name" value="UPF0260 PROTEIN YCGN"/>
    <property type="match status" value="1"/>
</dbReference>
<dbReference type="PANTHER" id="PTHR37421:SF1">
    <property type="entry name" value="UPF0260 PROTEIN YCGN"/>
    <property type="match status" value="1"/>
</dbReference>
<dbReference type="Pfam" id="PF03692">
    <property type="entry name" value="CxxCxxCC"/>
    <property type="match status" value="1"/>
</dbReference>
<dbReference type="PIRSF" id="PIRSF006173">
    <property type="entry name" value="UCP006173"/>
    <property type="match status" value="1"/>
</dbReference>
<name>Y1881_RHOP5</name>
<protein>
    <recommendedName>
        <fullName evidence="1">UPF0260 protein RPE_1881</fullName>
    </recommendedName>
</protein>
<comment type="similarity">
    <text evidence="1">Belongs to the UPF0260 family.</text>
</comment>
<accession>Q07QF5</accession>
<sequence length="170" mass="19124">MAAVPKRPSQQQELFWKTKTLEQMSAAEWESLCDGCARCCLEKLECEDTGRIYFTHIGCKMLDAEACGCKDYANRSKKVPDCVRLTPANVRTLSWLPSSCAYRLVAEGRDLYWWHPLVSGDPDTVHEAGVSVRGRVEGLEGEVSDAELEDHIVSWPTLLPKRAKLKKRPA</sequence>
<evidence type="ECO:0000255" key="1">
    <source>
        <dbReference type="HAMAP-Rule" id="MF_00676"/>
    </source>
</evidence>
<proteinExistence type="inferred from homology"/>
<reference key="1">
    <citation type="submission" date="2006-09" db="EMBL/GenBank/DDBJ databases">
        <title>Complete sequence of Rhodopseudomonas palustris BisA53.</title>
        <authorList>
            <consortium name="US DOE Joint Genome Institute"/>
            <person name="Copeland A."/>
            <person name="Lucas S."/>
            <person name="Lapidus A."/>
            <person name="Barry K."/>
            <person name="Detter J.C."/>
            <person name="Glavina del Rio T."/>
            <person name="Hammon N."/>
            <person name="Israni S."/>
            <person name="Dalin E."/>
            <person name="Tice H."/>
            <person name="Pitluck S."/>
            <person name="Chain P."/>
            <person name="Malfatti S."/>
            <person name="Shin M."/>
            <person name="Vergez L."/>
            <person name="Schmutz J."/>
            <person name="Larimer F."/>
            <person name="Land M."/>
            <person name="Hauser L."/>
            <person name="Pelletier D.A."/>
            <person name="Kyrpides N."/>
            <person name="Kim E."/>
            <person name="Harwood C.S."/>
            <person name="Oda Y."/>
            <person name="Richardson P."/>
        </authorList>
    </citation>
    <scope>NUCLEOTIDE SEQUENCE [LARGE SCALE GENOMIC DNA]</scope>
    <source>
        <strain>BisA53</strain>
    </source>
</reference>